<keyword id="KW-0866">Nonsense-mediated mRNA decay</keyword>
<keyword id="KW-1185">Reference proteome</keyword>
<protein>
    <recommendedName>
        <fullName evidence="2">Nonsense-mediated mRNA decay factor SMG8</fullName>
    </recommendedName>
    <alternativeName>
        <fullName>Protein smg-8 homolog</fullName>
    </alternativeName>
</protein>
<reference key="1">
    <citation type="journal article" date="2007" name="Nature">
        <title>Evolution of genes and genomes on the Drosophila phylogeny.</title>
        <authorList>
            <consortium name="Drosophila 12 genomes consortium"/>
        </authorList>
    </citation>
    <scope>NUCLEOTIDE SEQUENCE [LARGE SCALE GENOMIC DNA]</scope>
    <source>
        <strain>MSH-3 / Tucson 14011-0111.49</strain>
    </source>
</reference>
<comment type="function">
    <text evidence="1">Involved in nonsense-mediated decay (NMD) of mRNAs containing premature stop codons. Probable component of kinase complex containing nonC and recruited to stalled ribosomes (By similarity).</text>
</comment>
<comment type="similarity">
    <text evidence="4">Belongs to the SMG8 family.</text>
</comment>
<accession>B4GH42</accession>
<name>SMG8_DROPE</name>
<dbReference type="EMBL" id="CH479183">
    <property type="protein sequence ID" value="EDW35812.1"/>
    <property type="molecule type" value="Genomic_DNA"/>
</dbReference>
<dbReference type="SMR" id="B4GH42"/>
<dbReference type="STRING" id="7234.B4GH42"/>
<dbReference type="EnsemblMetazoa" id="FBtr0182628">
    <property type="protein sequence ID" value="FBpp0181120"/>
    <property type="gene ID" value="FBgn0154617"/>
</dbReference>
<dbReference type="EnsemblMetazoa" id="XM_002017937.2">
    <property type="protein sequence ID" value="XP_002017973.1"/>
    <property type="gene ID" value="LOC6592368"/>
</dbReference>
<dbReference type="GeneID" id="6592368"/>
<dbReference type="KEGG" id="dpe:6592368"/>
<dbReference type="eggNOG" id="KOG3692">
    <property type="taxonomic scope" value="Eukaryota"/>
</dbReference>
<dbReference type="HOGENOM" id="CLU_008116_0_0_1"/>
<dbReference type="OMA" id="HVCHIVV"/>
<dbReference type="OrthoDB" id="63589at2759"/>
<dbReference type="PhylomeDB" id="B4GH42"/>
<dbReference type="Proteomes" id="UP000008744">
    <property type="component" value="Unassembled WGS sequence"/>
</dbReference>
<dbReference type="GO" id="GO:0000184">
    <property type="term" value="P:nuclear-transcribed mRNA catabolic process, nonsense-mediated decay"/>
    <property type="evidence" value="ECO:0000250"/>
    <property type="project" value="UniProtKB"/>
</dbReference>
<dbReference type="InterPro" id="IPR019354">
    <property type="entry name" value="SMG8-like"/>
</dbReference>
<dbReference type="PANTHER" id="PTHR13091">
    <property type="entry name" value="AMPLIFIED IN BREAST CANCER 2-RELATED"/>
    <property type="match status" value="1"/>
</dbReference>
<dbReference type="PANTHER" id="PTHR13091:SF0">
    <property type="entry name" value="NONSENSE-MEDIATED MRNA DECAY FACTOR SMG8"/>
    <property type="match status" value="1"/>
</dbReference>
<dbReference type="Pfam" id="PF10220">
    <property type="entry name" value="Smg8_Smg9"/>
    <property type="match status" value="1"/>
</dbReference>
<gene>
    <name type="ORF">GL17013</name>
</gene>
<feature type="chain" id="PRO_0000378176" description="Nonsense-mediated mRNA decay factor SMG8">
    <location>
        <begin position="1"/>
        <end position="953"/>
    </location>
</feature>
<feature type="region of interest" description="Disordered" evidence="3">
    <location>
        <begin position="571"/>
        <end position="604"/>
    </location>
</feature>
<feature type="region of interest" description="Disordered" evidence="3">
    <location>
        <begin position="629"/>
        <end position="653"/>
    </location>
</feature>
<feature type="compositionally biased region" description="Acidic residues" evidence="3">
    <location>
        <begin position="574"/>
        <end position="586"/>
    </location>
</feature>
<feature type="compositionally biased region" description="Polar residues" evidence="3">
    <location>
        <begin position="595"/>
        <end position="604"/>
    </location>
</feature>
<feature type="compositionally biased region" description="Low complexity" evidence="3">
    <location>
        <begin position="634"/>
        <end position="653"/>
    </location>
</feature>
<sequence length="953" mass="108351">MGLKDYYTWTFPNIPEHVAQELDQLGRSLVVVGVIGRSRCVLANKMRAFGMEPPVDHEPTDGQLQCYYKPGSSTLLLHFETTFDDAILGQQIDETMEQDGAPFDFDGFYERMKCRFVRMMLLALHVCHILVYVETGQTFDLSLVTIFQLMKFAREQHLMQFLPSLLKETPAGRLLGEKCRLCTPRILFLFENFTHEEGKTRECVSACEFQTEDSIYELLRHHQIITNSSSSSLLALPNNKQFVFYNAHDQLHADRLLQSIEFLNLDMRKLDVKEEEDDLEVLELAPFDGFVKSFGESFESTNYEEQQYKTEHTAWHFLQRHVQDALLGCFDEGSFKQVPQRGQLQLLNAQEWHDCIAELHKLLVSSAGTQESLNEIRNEDYQVFLQSFDESLNYEKKFWAHLCEIGLKMGIEAYKKAAPAIYGSSMHQQLLAEATLAFEEEGRGPPAEASIAKMTATCLRHWQDGRQQCEQLSLRSQPCTQPKEMPHDKHNSGVIHVSSCNCGRTQGRREDPFSLRQANYEFYEHMVKMCNLCVKVKQFKFPIFEPTNNEYRAAAFEVAFPLLHAGKNRLAQDAELDPDEEDEELPTGEREEQHITQSNGCSQPLSPTFGSDLNMSIAGFGVSLNESEPCFDQSSSSEAESTCSGTSSEESNNELVLQLKEPAKKHEESCDPDSIAPLPSMCLTSTTEYLPGLVHTLSKVGLLPLFPSWSLACVGPSSIYSHNTGLQEHFQSGFLSGANFLLPWDVQLRLVHASKHYHNSHQPHMSKKQQRYRKHGDRMVLKIFVGFEYECSRGHRFMMCRPDRVLRGGADIERDTCSKMVHTNMPLYYPCPCRSQNNYLAQLMRIHVVTPKAPVNIIVDPKVCMGKDKYTFTLGSMVPPRLSQSAYWILRLPYVYQGDDALIAPPEKLEPDDIMAGGYLLAGMFGIAETDPTLDLNDQGHLDTNELGTFTRI</sequence>
<proteinExistence type="inferred from homology"/>
<evidence type="ECO:0000250" key="1"/>
<evidence type="ECO:0000250" key="2">
    <source>
        <dbReference type="UniProtKB" id="Q8ND04"/>
    </source>
</evidence>
<evidence type="ECO:0000256" key="3">
    <source>
        <dbReference type="SAM" id="MobiDB-lite"/>
    </source>
</evidence>
<evidence type="ECO:0000305" key="4"/>
<organism>
    <name type="scientific">Drosophila persimilis</name>
    <name type="common">Fruit fly</name>
    <dbReference type="NCBI Taxonomy" id="7234"/>
    <lineage>
        <taxon>Eukaryota</taxon>
        <taxon>Metazoa</taxon>
        <taxon>Ecdysozoa</taxon>
        <taxon>Arthropoda</taxon>
        <taxon>Hexapoda</taxon>
        <taxon>Insecta</taxon>
        <taxon>Pterygota</taxon>
        <taxon>Neoptera</taxon>
        <taxon>Endopterygota</taxon>
        <taxon>Diptera</taxon>
        <taxon>Brachycera</taxon>
        <taxon>Muscomorpha</taxon>
        <taxon>Ephydroidea</taxon>
        <taxon>Drosophilidae</taxon>
        <taxon>Drosophila</taxon>
        <taxon>Sophophora</taxon>
    </lineage>
</organism>